<name>BET12_ARATH</name>
<gene>
    <name type="primary">BET12</name>
    <name type="ordered locus">At4g14455</name>
    <name type="ORF">FCAALL.379</name>
</gene>
<feature type="chain" id="PRO_0000206888" description="Bet1-like SNARE 1-2">
    <location>
        <begin position="1"/>
        <end position="130"/>
    </location>
</feature>
<feature type="topological domain" description="Cytoplasmic" evidence="2">
    <location>
        <begin position="1"/>
        <end position="106"/>
    </location>
</feature>
<feature type="transmembrane region" description="Helical; Anchor for type IV membrane protein" evidence="2">
    <location>
        <begin position="107"/>
        <end position="122"/>
    </location>
</feature>
<feature type="topological domain" description="Vesicular" evidence="2">
    <location>
        <begin position="123"/>
        <end position="130"/>
    </location>
</feature>
<feature type="domain" description="t-SNARE coiled-coil homology" evidence="3">
    <location>
        <begin position="33"/>
        <end position="95"/>
    </location>
</feature>
<feature type="coiled-coil region" evidence="2">
    <location>
        <begin position="40"/>
        <end position="82"/>
    </location>
</feature>
<feature type="sequence conflict" description="In Ref. 5; AAK51151." evidence="4" ref="5">
    <original>E</original>
    <variation>K</variation>
    <location>
        <position position="65"/>
    </location>
</feature>
<evidence type="ECO:0000250" key="1"/>
<evidence type="ECO:0000255" key="2"/>
<evidence type="ECO:0000255" key="3">
    <source>
        <dbReference type="PROSITE-ProRule" id="PRU00202"/>
    </source>
</evidence>
<evidence type="ECO:0000305" key="4"/>
<accession>Q94CG2</accession>
<accession>O23301</accession>
<accession>Q8GYR9</accession>
<proteinExistence type="evidence at transcript level"/>
<sequence length="130" mass="15207">MNFRRENRASRTSLFDGLDGLEEGRLRASSSYAHDERDNDEALENLQDRVSFLKRVTGDIHEEVENHNRLLDKVGNKMDSARGIMSGTINRFKLVFEKKSNRKSCKLIAYFVLLFLIMYYLIRLLNYIKG</sequence>
<dbReference type="EMBL" id="Z97336">
    <property type="protein sequence ID" value="CAB10224.1"/>
    <property type="status" value="ALT_SEQ"/>
    <property type="molecule type" value="Genomic_DNA"/>
</dbReference>
<dbReference type="EMBL" id="AL161539">
    <property type="protein sequence ID" value="CAB78487.1"/>
    <property type="status" value="ALT_SEQ"/>
    <property type="molecule type" value="Genomic_DNA"/>
</dbReference>
<dbReference type="EMBL" id="CP002687">
    <property type="protein sequence ID" value="AEE83447.1"/>
    <property type="molecule type" value="Genomic_DNA"/>
</dbReference>
<dbReference type="EMBL" id="AK117428">
    <property type="protein sequence ID" value="BAC42093.1"/>
    <property type="molecule type" value="mRNA"/>
</dbReference>
<dbReference type="EMBL" id="AY033334">
    <property type="protein sequence ID" value="AAK51151.1"/>
    <property type="molecule type" value="mRNA"/>
</dbReference>
<dbReference type="SMR" id="Q94CG2"/>
<dbReference type="BioGRID" id="12388">
    <property type="interactions" value="242"/>
</dbReference>
<dbReference type="FunCoup" id="Q94CG2">
    <property type="interactions" value="3655"/>
</dbReference>
<dbReference type="IntAct" id="Q94CG2">
    <property type="interactions" value="237"/>
</dbReference>
<dbReference type="STRING" id="3702.Q94CG2"/>
<dbReference type="PaxDb" id="3702-AT4G14455.1"/>
<dbReference type="ProteomicsDB" id="240462"/>
<dbReference type="EnsemblPlants" id="AT4G14455.1">
    <property type="protein sequence ID" value="AT4G14455.1"/>
    <property type="gene ID" value="AT4G14455"/>
</dbReference>
<dbReference type="GeneID" id="827091"/>
<dbReference type="Gramene" id="AT4G14455.1">
    <property type="protein sequence ID" value="AT4G14455.1"/>
    <property type="gene ID" value="AT4G14455"/>
</dbReference>
<dbReference type="KEGG" id="ath:AT4G14455"/>
<dbReference type="Araport" id="AT4G14455"/>
<dbReference type="TAIR" id="AT4G14455">
    <property type="gene designation" value="ATBET12"/>
</dbReference>
<dbReference type="eggNOG" id="KOG3385">
    <property type="taxonomic scope" value="Eukaryota"/>
</dbReference>
<dbReference type="HOGENOM" id="CLU_086133_0_0_1"/>
<dbReference type="InParanoid" id="Q94CG2"/>
<dbReference type="OMA" id="KMDSARG"/>
<dbReference type="OrthoDB" id="261831at2759"/>
<dbReference type="PhylomeDB" id="Q94CG2"/>
<dbReference type="PRO" id="PR:Q94CG2"/>
<dbReference type="Proteomes" id="UP000006548">
    <property type="component" value="Chromosome 4"/>
</dbReference>
<dbReference type="ExpressionAtlas" id="Q94CG2">
    <property type="expression patterns" value="baseline and differential"/>
</dbReference>
<dbReference type="GO" id="GO:0005789">
    <property type="term" value="C:endoplasmic reticulum membrane"/>
    <property type="evidence" value="ECO:0007669"/>
    <property type="project" value="UniProtKB-SubCell"/>
</dbReference>
<dbReference type="GO" id="GO:0000139">
    <property type="term" value="C:Golgi membrane"/>
    <property type="evidence" value="ECO:0007669"/>
    <property type="project" value="UniProtKB-SubCell"/>
</dbReference>
<dbReference type="GO" id="GO:0005484">
    <property type="term" value="F:SNAP receptor activity"/>
    <property type="evidence" value="ECO:0000303"/>
    <property type="project" value="TAIR"/>
</dbReference>
<dbReference type="GO" id="GO:0006888">
    <property type="term" value="P:endoplasmic reticulum to Golgi vesicle-mediated transport"/>
    <property type="evidence" value="ECO:0000303"/>
    <property type="project" value="TAIR"/>
</dbReference>
<dbReference type="GO" id="GO:0015031">
    <property type="term" value="P:protein transport"/>
    <property type="evidence" value="ECO:0007669"/>
    <property type="project" value="UniProtKB-KW"/>
</dbReference>
<dbReference type="CDD" id="cd15853">
    <property type="entry name" value="SNARE_Bet1"/>
    <property type="match status" value="1"/>
</dbReference>
<dbReference type="FunFam" id="1.20.5.110:FF:000033">
    <property type="entry name" value="bet1-like SNARE 1-1"/>
    <property type="match status" value="1"/>
</dbReference>
<dbReference type="Gene3D" id="1.20.5.110">
    <property type="match status" value="1"/>
</dbReference>
<dbReference type="InterPro" id="IPR039899">
    <property type="entry name" value="BET1_SNARE"/>
</dbReference>
<dbReference type="InterPro" id="IPR000727">
    <property type="entry name" value="T_SNARE_dom"/>
</dbReference>
<dbReference type="PANTHER" id="PTHR12791">
    <property type="entry name" value="GOLGI SNARE BET1-RELATED"/>
    <property type="match status" value="1"/>
</dbReference>
<dbReference type="SUPFAM" id="SSF58038">
    <property type="entry name" value="SNARE fusion complex"/>
    <property type="match status" value="1"/>
</dbReference>
<dbReference type="PROSITE" id="PS50192">
    <property type="entry name" value="T_SNARE"/>
    <property type="match status" value="1"/>
</dbReference>
<organism>
    <name type="scientific">Arabidopsis thaliana</name>
    <name type="common">Mouse-ear cress</name>
    <dbReference type="NCBI Taxonomy" id="3702"/>
    <lineage>
        <taxon>Eukaryota</taxon>
        <taxon>Viridiplantae</taxon>
        <taxon>Streptophyta</taxon>
        <taxon>Embryophyta</taxon>
        <taxon>Tracheophyta</taxon>
        <taxon>Spermatophyta</taxon>
        <taxon>Magnoliopsida</taxon>
        <taxon>eudicotyledons</taxon>
        <taxon>Gunneridae</taxon>
        <taxon>Pentapetalae</taxon>
        <taxon>rosids</taxon>
        <taxon>malvids</taxon>
        <taxon>Brassicales</taxon>
        <taxon>Brassicaceae</taxon>
        <taxon>Camelineae</taxon>
        <taxon>Arabidopsis</taxon>
    </lineage>
</organism>
<reference key="1">
    <citation type="journal article" date="1998" name="Nature">
        <title>Analysis of 1.9 Mb of contiguous sequence from chromosome 4 of Arabidopsis thaliana.</title>
        <authorList>
            <person name="Bevan M."/>
            <person name="Bancroft I."/>
            <person name="Bent E."/>
            <person name="Love K."/>
            <person name="Goodman H.M."/>
            <person name="Dean C."/>
            <person name="Bergkamp R."/>
            <person name="Dirkse W."/>
            <person name="van Staveren M."/>
            <person name="Stiekema W."/>
            <person name="Drost L."/>
            <person name="Ridley P."/>
            <person name="Hudson S.-A."/>
            <person name="Patel K."/>
            <person name="Murphy G."/>
            <person name="Piffanelli P."/>
            <person name="Wedler H."/>
            <person name="Wedler E."/>
            <person name="Wambutt R."/>
            <person name="Weitzenegger T."/>
            <person name="Pohl T."/>
            <person name="Terryn N."/>
            <person name="Gielen J."/>
            <person name="Villarroel R."/>
            <person name="De Clercq R."/>
            <person name="van Montagu M."/>
            <person name="Lecharny A."/>
            <person name="Aubourg S."/>
            <person name="Gy I."/>
            <person name="Kreis M."/>
            <person name="Lao N."/>
            <person name="Kavanagh T."/>
            <person name="Hempel S."/>
            <person name="Kotter P."/>
            <person name="Entian K.-D."/>
            <person name="Rieger M."/>
            <person name="Schaefer M."/>
            <person name="Funk B."/>
            <person name="Mueller-Auer S."/>
            <person name="Silvey M."/>
            <person name="James R."/>
            <person name="Monfort A."/>
            <person name="Pons A."/>
            <person name="Puigdomenech P."/>
            <person name="Douka A."/>
            <person name="Voukelatou E."/>
            <person name="Milioni D."/>
            <person name="Hatzopoulos P."/>
            <person name="Piravandi E."/>
            <person name="Obermaier B."/>
            <person name="Hilbert H."/>
            <person name="Duesterhoeft A."/>
            <person name="Moores T."/>
            <person name="Jones J.D.G."/>
            <person name="Eneva T."/>
            <person name="Palme K."/>
            <person name="Benes V."/>
            <person name="Rechmann S."/>
            <person name="Ansorge W."/>
            <person name="Cooke R."/>
            <person name="Berger C."/>
            <person name="Delseny M."/>
            <person name="Voet M."/>
            <person name="Volckaert G."/>
            <person name="Mewes H.-W."/>
            <person name="Klosterman S."/>
            <person name="Schueller C."/>
            <person name="Chalwatzis N."/>
        </authorList>
    </citation>
    <scope>NUCLEOTIDE SEQUENCE [LARGE SCALE GENOMIC DNA]</scope>
    <source>
        <strain>cv. Columbia</strain>
    </source>
</reference>
<reference key="2">
    <citation type="journal article" date="1999" name="Nature">
        <title>Sequence and analysis of chromosome 4 of the plant Arabidopsis thaliana.</title>
        <authorList>
            <person name="Mayer K.F.X."/>
            <person name="Schueller C."/>
            <person name="Wambutt R."/>
            <person name="Murphy G."/>
            <person name="Volckaert G."/>
            <person name="Pohl T."/>
            <person name="Duesterhoeft A."/>
            <person name="Stiekema W."/>
            <person name="Entian K.-D."/>
            <person name="Terryn N."/>
            <person name="Harris B."/>
            <person name="Ansorge W."/>
            <person name="Brandt P."/>
            <person name="Grivell L.A."/>
            <person name="Rieger M."/>
            <person name="Weichselgartner M."/>
            <person name="de Simone V."/>
            <person name="Obermaier B."/>
            <person name="Mache R."/>
            <person name="Mueller M."/>
            <person name="Kreis M."/>
            <person name="Delseny M."/>
            <person name="Puigdomenech P."/>
            <person name="Watson M."/>
            <person name="Schmidtheini T."/>
            <person name="Reichert B."/>
            <person name="Portetelle D."/>
            <person name="Perez-Alonso M."/>
            <person name="Boutry M."/>
            <person name="Bancroft I."/>
            <person name="Vos P."/>
            <person name="Hoheisel J."/>
            <person name="Zimmermann W."/>
            <person name="Wedler H."/>
            <person name="Ridley P."/>
            <person name="Langham S.-A."/>
            <person name="McCullagh B."/>
            <person name="Bilham L."/>
            <person name="Robben J."/>
            <person name="van der Schueren J."/>
            <person name="Grymonprez B."/>
            <person name="Chuang Y.-J."/>
            <person name="Vandenbussche F."/>
            <person name="Braeken M."/>
            <person name="Weltjens I."/>
            <person name="Voet M."/>
            <person name="Bastiaens I."/>
            <person name="Aert R."/>
            <person name="Defoor E."/>
            <person name="Weitzenegger T."/>
            <person name="Bothe G."/>
            <person name="Ramsperger U."/>
            <person name="Hilbert H."/>
            <person name="Braun M."/>
            <person name="Holzer E."/>
            <person name="Brandt A."/>
            <person name="Peters S."/>
            <person name="van Staveren M."/>
            <person name="Dirkse W."/>
            <person name="Mooijman P."/>
            <person name="Klein Lankhorst R."/>
            <person name="Rose M."/>
            <person name="Hauf J."/>
            <person name="Koetter P."/>
            <person name="Berneiser S."/>
            <person name="Hempel S."/>
            <person name="Feldpausch M."/>
            <person name="Lamberth S."/>
            <person name="Van den Daele H."/>
            <person name="De Keyser A."/>
            <person name="Buysshaert C."/>
            <person name="Gielen J."/>
            <person name="Villarroel R."/>
            <person name="De Clercq R."/>
            <person name="van Montagu M."/>
            <person name="Rogers J."/>
            <person name="Cronin A."/>
            <person name="Quail M.A."/>
            <person name="Bray-Allen S."/>
            <person name="Clark L."/>
            <person name="Doggett J."/>
            <person name="Hall S."/>
            <person name="Kay M."/>
            <person name="Lennard N."/>
            <person name="McLay K."/>
            <person name="Mayes R."/>
            <person name="Pettett A."/>
            <person name="Rajandream M.A."/>
            <person name="Lyne M."/>
            <person name="Benes V."/>
            <person name="Rechmann S."/>
            <person name="Borkova D."/>
            <person name="Bloecker H."/>
            <person name="Scharfe M."/>
            <person name="Grimm M."/>
            <person name="Loehnert T.-H."/>
            <person name="Dose S."/>
            <person name="de Haan M."/>
            <person name="Maarse A.C."/>
            <person name="Schaefer M."/>
            <person name="Mueller-Auer S."/>
            <person name="Gabel C."/>
            <person name="Fuchs M."/>
            <person name="Fartmann B."/>
            <person name="Granderath K."/>
            <person name="Dauner D."/>
            <person name="Herzl A."/>
            <person name="Neumann S."/>
            <person name="Argiriou A."/>
            <person name="Vitale D."/>
            <person name="Liguori R."/>
            <person name="Piravandi E."/>
            <person name="Massenet O."/>
            <person name="Quigley F."/>
            <person name="Clabauld G."/>
            <person name="Muendlein A."/>
            <person name="Felber R."/>
            <person name="Schnabl S."/>
            <person name="Hiller R."/>
            <person name="Schmidt W."/>
            <person name="Lecharny A."/>
            <person name="Aubourg S."/>
            <person name="Chefdor F."/>
            <person name="Cooke R."/>
            <person name="Berger C."/>
            <person name="Monfort A."/>
            <person name="Casacuberta E."/>
            <person name="Gibbons T."/>
            <person name="Weber N."/>
            <person name="Vandenbol M."/>
            <person name="Bargues M."/>
            <person name="Terol J."/>
            <person name="Torres A."/>
            <person name="Perez-Perez A."/>
            <person name="Purnelle B."/>
            <person name="Bent E."/>
            <person name="Johnson S."/>
            <person name="Tacon D."/>
            <person name="Jesse T."/>
            <person name="Heijnen L."/>
            <person name="Schwarz S."/>
            <person name="Scholler P."/>
            <person name="Heber S."/>
            <person name="Francs P."/>
            <person name="Bielke C."/>
            <person name="Frishman D."/>
            <person name="Haase D."/>
            <person name="Lemcke K."/>
            <person name="Mewes H.-W."/>
            <person name="Stocker S."/>
            <person name="Zaccaria P."/>
            <person name="Bevan M."/>
            <person name="Wilson R.K."/>
            <person name="de la Bastide M."/>
            <person name="Habermann K."/>
            <person name="Parnell L."/>
            <person name="Dedhia N."/>
            <person name="Gnoj L."/>
            <person name="Schutz K."/>
            <person name="Huang E."/>
            <person name="Spiegel L."/>
            <person name="Sekhon M."/>
            <person name="Murray J."/>
            <person name="Sheet P."/>
            <person name="Cordes M."/>
            <person name="Abu-Threideh J."/>
            <person name="Stoneking T."/>
            <person name="Kalicki J."/>
            <person name="Graves T."/>
            <person name="Harmon G."/>
            <person name="Edwards J."/>
            <person name="Latreille P."/>
            <person name="Courtney L."/>
            <person name="Cloud J."/>
            <person name="Abbott A."/>
            <person name="Scott K."/>
            <person name="Johnson D."/>
            <person name="Minx P."/>
            <person name="Bentley D."/>
            <person name="Fulton B."/>
            <person name="Miller N."/>
            <person name="Greco T."/>
            <person name="Kemp K."/>
            <person name="Kramer J."/>
            <person name="Fulton L."/>
            <person name="Mardis E."/>
            <person name="Dante M."/>
            <person name="Pepin K."/>
            <person name="Hillier L.W."/>
            <person name="Nelson J."/>
            <person name="Spieth J."/>
            <person name="Ryan E."/>
            <person name="Andrews S."/>
            <person name="Geisel C."/>
            <person name="Layman D."/>
            <person name="Du H."/>
            <person name="Ali J."/>
            <person name="Berghoff A."/>
            <person name="Jones K."/>
            <person name="Drone K."/>
            <person name="Cotton M."/>
            <person name="Joshu C."/>
            <person name="Antonoiu B."/>
            <person name="Zidanic M."/>
            <person name="Strong C."/>
            <person name="Sun H."/>
            <person name="Lamar B."/>
            <person name="Yordan C."/>
            <person name="Ma P."/>
            <person name="Zhong J."/>
            <person name="Preston R."/>
            <person name="Vil D."/>
            <person name="Shekher M."/>
            <person name="Matero A."/>
            <person name="Shah R."/>
            <person name="Swaby I.K."/>
            <person name="O'Shaughnessy A."/>
            <person name="Rodriguez M."/>
            <person name="Hoffman J."/>
            <person name="Till S."/>
            <person name="Granat S."/>
            <person name="Shohdy N."/>
            <person name="Hasegawa A."/>
            <person name="Hameed A."/>
            <person name="Lodhi M."/>
            <person name="Johnson A."/>
            <person name="Chen E."/>
            <person name="Marra M.A."/>
            <person name="Martienssen R."/>
            <person name="McCombie W.R."/>
        </authorList>
    </citation>
    <scope>NUCLEOTIDE SEQUENCE [LARGE SCALE GENOMIC DNA]</scope>
    <source>
        <strain>cv. Columbia</strain>
    </source>
</reference>
<reference key="3">
    <citation type="journal article" date="2017" name="Plant J.">
        <title>Araport11: a complete reannotation of the Arabidopsis thaliana reference genome.</title>
        <authorList>
            <person name="Cheng C.Y."/>
            <person name="Krishnakumar V."/>
            <person name="Chan A.P."/>
            <person name="Thibaud-Nissen F."/>
            <person name="Schobel S."/>
            <person name="Town C.D."/>
        </authorList>
    </citation>
    <scope>GENOME REANNOTATION</scope>
    <source>
        <strain>cv. Columbia</strain>
    </source>
</reference>
<reference key="4">
    <citation type="journal article" date="2002" name="Science">
        <title>Functional annotation of a full-length Arabidopsis cDNA collection.</title>
        <authorList>
            <person name="Seki M."/>
            <person name="Narusaka M."/>
            <person name="Kamiya A."/>
            <person name="Ishida J."/>
            <person name="Satou M."/>
            <person name="Sakurai T."/>
            <person name="Nakajima M."/>
            <person name="Enju A."/>
            <person name="Akiyama K."/>
            <person name="Oono Y."/>
            <person name="Muramatsu M."/>
            <person name="Hayashizaki Y."/>
            <person name="Kawai J."/>
            <person name="Carninci P."/>
            <person name="Itoh M."/>
            <person name="Ishii Y."/>
            <person name="Arakawa T."/>
            <person name="Shibata K."/>
            <person name="Shinagawa A."/>
            <person name="Shinozaki K."/>
        </authorList>
    </citation>
    <scope>NUCLEOTIDE SEQUENCE [LARGE SCALE MRNA]</scope>
    <source>
        <strain>cv. Columbia</strain>
    </source>
</reference>
<reference key="5">
    <citation type="journal article" date="2001" name="FEBS Lett.">
        <title>AtBS14a and AtBS14b, two Bet1/Sft1-like SNAREs from Arabidopsis thaliana that complement mutations in the yeast SFT1 gene.</title>
        <authorList>
            <person name="Tai W.C.S."/>
            <person name="Banfield D.K."/>
        </authorList>
    </citation>
    <scope>NUCLEOTIDE SEQUENCE [MRNA] OF 8-117</scope>
</reference>
<comment type="function">
    <text evidence="1">Required for vesicular transport from the ER to the Golgi complex. Functions as a SNARE associated with ER-derived vesicles (By similarity).</text>
</comment>
<comment type="subcellular location">
    <subcellularLocation>
        <location evidence="1">Golgi apparatus membrane</location>
        <topology evidence="1">Single-pass type IV membrane protein</topology>
    </subcellularLocation>
    <subcellularLocation>
        <location evidence="1">Endoplasmic reticulum membrane</location>
        <topology evidence="1">Single-pass type IV membrane protein</topology>
    </subcellularLocation>
</comment>
<comment type="similarity">
    <text evidence="4">Belongs to the BET1 family.</text>
</comment>
<comment type="sequence caution" evidence="4">
    <conflict type="erroneous gene model prediction">
        <sequence resource="EMBL-CDS" id="CAB10224"/>
    </conflict>
    <text>The predicted gene At4g14450 has been split into 2 genes: At4g14450 and At4g14455.</text>
</comment>
<comment type="sequence caution" evidence="4">
    <conflict type="erroneous gene model prediction">
        <sequence resource="EMBL-CDS" id="CAB78487"/>
    </conflict>
    <text>The predicted gene At4g14450 has been split into 2 genes: At4g14450 and At4g14455.</text>
</comment>
<keyword id="KW-0175">Coiled coil</keyword>
<keyword id="KW-0256">Endoplasmic reticulum</keyword>
<keyword id="KW-0931">ER-Golgi transport</keyword>
<keyword id="KW-0333">Golgi apparatus</keyword>
<keyword id="KW-0472">Membrane</keyword>
<keyword id="KW-0653">Protein transport</keyword>
<keyword id="KW-1185">Reference proteome</keyword>
<keyword id="KW-0812">Transmembrane</keyword>
<keyword id="KW-1133">Transmembrane helix</keyword>
<keyword id="KW-0813">Transport</keyword>
<protein>
    <recommendedName>
        <fullName>Bet1-like SNARE 1-2</fullName>
        <shortName>AtBET12</shortName>
    </recommendedName>
    <alternativeName>
        <fullName>Bet1/Sft1-like SNARE 14b</fullName>
        <shortName>AtBS14b</shortName>
    </alternativeName>
</protein>